<evidence type="ECO:0000255" key="1">
    <source>
        <dbReference type="HAMAP-Rule" id="MF_00384"/>
    </source>
</evidence>
<keyword id="KW-0028">Amino-acid biosynthesis</keyword>
<keyword id="KW-0067">ATP-binding</keyword>
<keyword id="KW-0963">Cytoplasm</keyword>
<keyword id="KW-0418">Kinase</keyword>
<keyword id="KW-0547">Nucleotide-binding</keyword>
<keyword id="KW-0791">Threonine biosynthesis</keyword>
<keyword id="KW-0808">Transferase</keyword>
<name>KHSE_VIBVU</name>
<feature type="chain" id="PRO_0000156630" description="Homoserine kinase">
    <location>
        <begin position="1"/>
        <end position="318"/>
    </location>
</feature>
<feature type="binding site" evidence="1">
    <location>
        <begin position="97"/>
        <end position="107"/>
    </location>
    <ligand>
        <name>ATP</name>
        <dbReference type="ChEBI" id="CHEBI:30616"/>
    </ligand>
</feature>
<proteinExistence type="inferred from homology"/>
<organism>
    <name type="scientific">Vibrio vulnificus (strain CMCP6)</name>
    <dbReference type="NCBI Taxonomy" id="216895"/>
    <lineage>
        <taxon>Bacteria</taxon>
        <taxon>Pseudomonadati</taxon>
        <taxon>Pseudomonadota</taxon>
        <taxon>Gammaproteobacteria</taxon>
        <taxon>Vibrionales</taxon>
        <taxon>Vibrionaceae</taxon>
        <taxon>Vibrio</taxon>
    </lineage>
</organism>
<protein>
    <recommendedName>
        <fullName evidence="1">Homoserine kinase</fullName>
        <shortName evidence="1">HK</shortName>
        <shortName evidence="1">HSK</shortName>
        <ecNumber evidence="1">2.7.1.39</ecNumber>
    </recommendedName>
</protein>
<sequence>MAVVVYAPASIGNVSVGFDVLGAAVSPIDGTLLGDRVMVKAGNEPFSLKTAGSFVAKLPSDPKENIVYDCWRVFARELDKKGLELKPLEMTLEKNMPIGSGLGSSACSIVAALDALNQFHANPLDEMELLALMGEMEGQISGGVHYDNVAPCYLGGLQLMLEELGIISQEVPCFDDWYWVMAYPGIKVSTAEARAILPSQYRRQDVIAHGRHLAGFIHACHSGQPELAAKMIKDVIAEPYREKLLPGFADARKYAASAGALATGISGSGPTLFSICKDQDVAQRVARWLEQNYVQNEEGFVHICRLDKKGSIVTGSEL</sequence>
<accession>Q8DEP3</accession>
<gene>
    <name evidence="1" type="primary">thrB</name>
    <name type="ordered locus">VV1_0544</name>
</gene>
<dbReference type="EC" id="2.7.1.39" evidence="1"/>
<dbReference type="EMBL" id="AE016795">
    <property type="protein sequence ID" value="AAO09061.1"/>
    <property type="molecule type" value="Genomic_DNA"/>
</dbReference>
<dbReference type="RefSeq" id="WP_011078631.1">
    <property type="nucleotide sequence ID" value="NC_004459.3"/>
</dbReference>
<dbReference type="SMR" id="Q8DEP3"/>
<dbReference type="GeneID" id="93894856"/>
<dbReference type="KEGG" id="vvu:VV1_0544"/>
<dbReference type="HOGENOM" id="CLU_041243_1_1_6"/>
<dbReference type="UniPathway" id="UPA00050">
    <property type="reaction ID" value="UER00064"/>
</dbReference>
<dbReference type="Proteomes" id="UP000002275">
    <property type="component" value="Chromosome 1"/>
</dbReference>
<dbReference type="GO" id="GO:0005737">
    <property type="term" value="C:cytoplasm"/>
    <property type="evidence" value="ECO:0007669"/>
    <property type="project" value="UniProtKB-SubCell"/>
</dbReference>
<dbReference type="GO" id="GO:0005524">
    <property type="term" value="F:ATP binding"/>
    <property type="evidence" value="ECO:0007669"/>
    <property type="project" value="UniProtKB-UniRule"/>
</dbReference>
<dbReference type="GO" id="GO:0004413">
    <property type="term" value="F:homoserine kinase activity"/>
    <property type="evidence" value="ECO:0007669"/>
    <property type="project" value="UniProtKB-UniRule"/>
</dbReference>
<dbReference type="GO" id="GO:0009088">
    <property type="term" value="P:threonine biosynthetic process"/>
    <property type="evidence" value="ECO:0007669"/>
    <property type="project" value="UniProtKB-UniRule"/>
</dbReference>
<dbReference type="FunFam" id="3.30.70.890:FF:000002">
    <property type="entry name" value="Homoserine kinase"/>
    <property type="match status" value="1"/>
</dbReference>
<dbReference type="Gene3D" id="3.30.230.10">
    <property type="match status" value="1"/>
</dbReference>
<dbReference type="Gene3D" id="3.30.70.890">
    <property type="entry name" value="GHMP kinase, C-terminal domain"/>
    <property type="match status" value="1"/>
</dbReference>
<dbReference type="HAMAP" id="MF_00384">
    <property type="entry name" value="Homoser_kinase"/>
    <property type="match status" value="1"/>
</dbReference>
<dbReference type="InterPro" id="IPR013750">
    <property type="entry name" value="GHMP_kinase_C_dom"/>
</dbReference>
<dbReference type="InterPro" id="IPR036554">
    <property type="entry name" value="GHMP_kinase_C_sf"/>
</dbReference>
<dbReference type="InterPro" id="IPR006204">
    <property type="entry name" value="GHMP_kinase_N_dom"/>
</dbReference>
<dbReference type="InterPro" id="IPR006203">
    <property type="entry name" value="GHMP_knse_ATP-bd_CS"/>
</dbReference>
<dbReference type="InterPro" id="IPR000870">
    <property type="entry name" value="Homoserine_kinase"/>
</dbReference>
<dbReference type="InterPro" id="IPR020568">
    <property type="entry name" value="Ribosomal_Su5_D2-typ_SF"/>
</dbReference>
<dbReference type="InterPro" id="IPR014721">
    <property type="entry name" value="Ribsml_uS5_D2-typ_fold_subgr"/>
</dbReference>
<dbReference type="NCBIfam" id="NF002288">
    <property type="entry name" value="PRK01212.1-4"/>
    <property type="match status" value="1"/>
</dbReference>
<dbReference type="NCBIfam" id="TIGR00191">
    <property type="entry name" value="thrB"/>
    <property type="match status" value="1"/>
</dbReference>
<dbReference type="PANTHER" id="PTHR20861:SF1">
    <property type="entry name" value="HOMOSERINE KINASE"/>
    <property type="match status" value="1"/>
</dbReference>
<dbReference type="PANTHER" id="PTHR20861">
    <property type="entry name" value="HOMOSERINE/4-DIPHOSPHOCYTIDYL-2-C-METHYL-D-ERYTHRITOL KINASE"/>
    <property type="match status" value="1"/>
</dbReference>
<dbReference type="Pfam" id="PF08544">
    <property type="entry name" value="GHMP_kinases_C"/>
    <property type="match status" value="1"/>
</dbReference>
<dbReference type="Pfam" id="PF00288">
    <property type="entry name" value="GHMP_kinases_N"/>
    <property type="match status" value="1"/>
</dbReference>
<dbReference type="PIRSF" id="PIRSF000676">
    <property type="entry name" value="Homoser_kin"/>
    <property type="match status" value="1"/>
</dbReference>
<dbReference type="PRINTS" id="PR00958">
    <property type="entry name" value="HOMSERKINASE"/>
</dbReference>
<dbReference type="SUPFAM" id="SSF55060">
    <property type="entry name" value="GHMP Kinase, C-terminal domain"/>
    <property type="match status" value="1"/>
</dbReference>
<dbReference type="SUPFAM" id="SSF54211">
    <property type="entry name" value="Ribosomal protein S5 domain 2-like"/>
    <property type="match status" value="1"/>
</dbReference>
<dbReference type="PROSITE" id="PS00627">
    <property type="entry name" value="GHMP_KINASES_ATP"/>
    <property type="match status" value="1"/>
</dbReference>
<reference key="1">
    <citation type="submission" date="2002-12" db="EMBL/GenBank/DDBJ databases">
        <title>Complete genome sequence of Vibrio vulnificus CMCP6.</title>
        <authorList>
            <person name="Rhee J.H."/>
            <person name="Kim S.Y."/>
            <person name="Chung S.S."/>
            <person name="Kim J.J."/>
            <person name="Moon Y.H."/>
            <person name="Jeong H."/>
            <person name="Choy H.E."/>
        </authorList>
    </citation>
    <scope>NUCLEOTIDE SEQUENCE [LARGE SCALE GENOMIC DNA]</scope>
    <source>
        <strain>CMCP6</strain>
    </source>
</reference>
<comment type="function">
    <text evidence="1">Catalyzes the ATP-dependent phosphorylation of L-homoserine to L-homoserine phosphate.</text>
</comment>
<comment type="catalytic activity">
    <reaction evidence="1">
        <text>L-homoserine + ATP = O-phospho-L-homoserine + ADP + H(+)</text>
        <dbReference type="Rhea" id="RHEA:13985"/>
        <dbReference type="ChEBI" id="CHEBI:15378"/>
        <dbReference type="ChEBI" id="CHEBI:30616"/>
        <dbReference type="ChEBI" id="CHEBI:57476"/>
        <dbReference type="ChEBI" id="CHEBI:57590"/>
        <dbReference type="ChEBI" id="CHEBI:456216"/>
        <dbReference type="EC" id="2.7.1.39"/>
    </reaction>
</comment>
<comment type="pathway">
    <text evidence="1">Amino-acid biosynthesis; L-threonine biosynthesis; L-threonine from L-aspartate: step 4/5.</text>
</comment>
<comment type="subcellular location">
    <subcellularLocation>
        <location evidence="1">Cytoplasm</location>
    </subcellularLocation>
</comment>
<comment type="similarity">
    <text evidence="1">Belongs to the GHMP kinase family. Homoserine kinase subfamily.</text>
</comment>